<sequence>MAAAVGVRGRYELPPCSGPGWLLSLSALLSVAARGAFATTHWVVTEDGKIQQQVDSPMNLKHPHDLVILMRQEATVNYLKELEKQLVAQKIHIEENEDRDTGLEQRHNKEDPDCIKAKVPLGDLDLYDGTYITLESKDISPEDYIDTESPVPPDPEQPDCTKILELPYSIHAFQHLRGVQERVNLSAPLLPKEDPIFTYLSKRLGRSIDDIGHLIHEGLQKNTSSWVLYNMASFYWRIKNEPYQVVECAMRALHFSSRHNKDIALVNLANVLHRAHFSADAAVVVHAALDDSDFFTSYYTLGNIYAMLGEYNHSVLCYDHALQARPGFEQAIKRKHAVLCQQKLEQKLEAQHRSLQRTLNELKEYQKQHDHYLRQQEILEKHKLIQEEQILRNIIHETQMAKEAQLGNHQICRLVNQQHSLHCQWDQPVRYHRGDIFENVDYVQFGEDSSTSSMMSVNFDVQSNQSDINDSVKSSPVAHSILWIWGRDSDAYRDKQHILWPKRADCTESYPRVPVGGELPTYFLPPENKGLRIHELSSDDYSTEEEAQTPDCSITDFRKSHTLSYLVKELEVRMDLKAKMPDDHARKILLSRINNYTIPEEEIGSFLFHAINKPNAPIWLILNEAGLYWRAVGNSTFAIACLQRALNLAPLQYQDVPLVNLANLLIHYGLHLDATKLLLQALAINSSEPLTFLSLGNAYLALKNISGALEAFRQALKLTTKCPECENSLKLIRCMQFYPFLYNITSSVCSGTVVEESNGSDEMENSDETKMSEEILALVDEFQQAWPLEGFGGALEMKGRRLDLQGIRVLKKGPQDGVARSSCYGDCRSEDDEATEWITFQVKRVKKPKGDHKKTPGKKVETGQIENGHRYQANLEITGPKVASPGPQGKKRDYQRLGWPSPDECLKLRWVELTAIVSTWLAVSSKNIDITEHIDFATPIQQPAMEPLCNGNLPTSMHTLDHLHGVSNRASLHYTGESQLTEVLQNLGKDQYPQQSLEQIGTRIAKVLEKNQTSWVLSSMAALYWRVKGQGKKAIDCLRQALHYAPHQMKDVPLISLANILHNAKLWNDAVIVATMAVEIAPHFAVNHFTLGNVYVAMEEFEKALVWYESTLKLQPEFVPAKNRIQTIQCHLMLKKGRRSP</sequence>
<keyword id="KW-0025">Alternative splicing</keyword>
<keyword id="KW-1003">Cell membrane</keyword>
<keyword id="KW-0970">Cilium biogenesis/degradation</keyword>
<keyword id="KW-0175">Coiled coil</keyword>
<keyword id="KW-0963">Cytoplasm</keyword>
<keyword id="KW-0206">Cytoskeleton</keyword>
<keyword id="KW-0472">Membrane</keyword>
<keyword id="KW-1267">Proteomics identification</keyword>
<keyword id="KW-1185">Reference proteome</keyword>
<keyword id="KW-0677">Repeat</keyword>
<keyword id="KW-0802">TPR repeat</keyword>
<proteinExistence type="evidence at protein level"/>
<evidence type="ECO:0000255" key="1"/>
<evidence type="ECO:0000269" key="2">
    <source>
    </source>
</evidence>
<evidence type="ECO:0000303" key="3">
    <source>
    </source>
</evidence>
<evidence type="ECO:0000305" key="4"/>
<dbReference type="EMBL" id="AC023085">
    <property type="status" value="NOT_ANNOTATED_CDS"/>
    <property type="molecule type" value="Genomic_DNA"/>
</dbReference>
<dbReference type="EMBL" id="AC087276">
    <property type="status" value="NOT_ANNOTATED_CDS"/>
    <property type="molecule type" value="Genomic_DNA"/>
</dbReference>
<dbReference type="EMBL" id="CH471064">
    <property type="protein sequence ID" value="EAW68094.1"/>
    <property type="molecule type" value="Genomic_DNA"/>
</dbReference>
<dbReference type="EMBL" id="BC017238">
    <property type="protein sequence ID" value="AAH17238.1"/>
    <property type="molecule type" value="mRNA"/>
</dbReference>
<dbReference type="EMBL" id="BC033000">
    <property type="protein sequence ID" value="AAH33000.1"/>
    <property type="molecule type" value="mRNA"/>
</dbReference>
<dbReference type="CCDS" id="CCDS31466.1">
    <molecule id="Q96AE7-1"/>
</dbReference>
<dbReference type="CCDS" id="CCDS76396.1">
    <molecule id="Q96AE7-2"/>
</dbReference>
<dbReference type="RefSeq" id="NP_001294872.1">
    <molecule id="Q96AE7-2"/>
    <property type="nucleotide sequence ID" value="NM_001307943.2"/>
</dbReference>
<dbReference type="RefSeq" id="NP_060729.2">
    <molecule id="Q96AE7-1"/>
    <property type="nucleotide sequence ID" value="NM_018259.5"/>
</dbReference>
<dbReference type="BioGRID" id="120879">
    <property type="interactions" value="169"/>
</dbReference>
<dbReference type="FunCoup" id="Q96AE7">
    <property type="interactions" value="1998"/>
</dbReference>
<dbReference type="IntAct" id="Q96AE7">
    <property type="interactions" value="76"/>
</dbReference>
<dbReference type="STRING" id="9606.ENSP00000039989"/>
<dbReference type="GlyConnect" id="1799">
    <property type="glycosylation" value="3 N-Linked glycans (1 site)"/>
</dbReference>
<dbReference type="GlyCosmos" id="Q96AE7">
    <property type="glycosylation" value="1 site, 3 glycans"/>
</dbReference>
<dbReference type="GlyGen" id="Q96AE7">
    <property type="glycosylation" value="7 sites, 11 N-linked glycans (4 sites), 2 O-linked glycans (3 sites)"/>
</dbReference>
<dbReference type="iPTMnet" id="Q96AE7"/>
<dbReference type="PhosphoSitePlus" id="Q96AE7"/>
<dbReference type="SwissPalm" id="Q96AE7"/>
<dbReference type="BioMuta" id="TTC17"/>
<dbReference type="DMDM" id="52783467"/>
<dbReference type="jPOST" id="Q96AE7"/>
<dbReference type="MassIVE" id="Q96AE7"/>
<dbReference type="PaxDb" id="9606-ENSP00000039989"/>
<dbReference type="PeptideAtlas" id="Q96AE7"/>
<dbReference type="ProteomicsDB" id="33701"/>
<dbReference type="ProteomicsDB" id="75960">
    <molecule id="Q96AE7-1"/>
</dbReference>
<dbReference type="Pumba" id="Q96AE7"/>
<dbReference type="Antibodypedia" id="26045">
    <property type="antibodies" value="40 antibodies from 15 providers"/>
</dbReference>
<dbReference type="DNASU" id="55761"/>
<dbReference type="Ensembl" id="ENST00000039989.9">
    <molecule id="Q96AE7-1"/>
    <property type="protein sequence ID" value="ENSP00000039989.4"/>
    <property type="gene ID" value="ENSG00000052841.16"/>
</dbReference>
<dbReference type="Ensembl" id="ENST00000299240.10">
    <molecule id="Q96AE7-2"/>
    <property type="protein sequence ID" value="ENSP00000299240.5"/>
    <property type="gene ID" value="ENSG00000052841.16"/>
</dbReference>
<dbReference type="GeneID" id="55761"/>
<dbReference type="KEGG" id="hsa:55761"/>
<dbReference type="MANE-Select" id="ENST00000039989.9">
    <property type="protein sequence ID" value="ENSP00000039989.4"/>
    <property type="RefSeq nucleotide sequence ID" value="NM_018259.6"/>
    <property type="RefSeq protein sequence ID" value="NP_060729.2"/>
</dbReference>
<dbReference type="UCSC" id="uc001mxh.4">
    <molecule id="Q96AE7-1"/>
    <property type="organism name" value="human"/>
</dbReference>
<dbReference type="AGR" id="HGNC:25596"/>
<dbReference type="CTD" id="55761"/>
<dbReference type="DisGeNET" id="55761"/>
<dbReference type="GeneCards" id="TTC17"/>
<dbReference type="HGNC" id="HGNC:25596">
    <property type="gene designation" value="TTC17"/>
</dbReference>
<dbReference type="HPA" id="ENSG00000052841">
    <property type="expression patterns" value="Low tissue specificity"/>
</dbReference>
<dbReference type="MIM" id="619388">
    <property type="type" value="gene"/>
</dbReference>
<dbReference type="neXtProt" id="NX_Q96AE7"/>
<dbReference type="OpenTargets" id="ENSG00000052841"/>
<dbReference type="PharmGKB" id="PA134912435"/>
<dbReference type="VEuPathDB" id="HostDB:ENSG00000052841"/>
<dbReference type="eggNOG" id="KOG4507">
    <property type="taxonomic scope" value="Eukaryota"/>
</dbReference>
<dbReference type="GeneTree" id="ENSGT00390000006196"/>
<dbReference type="HOGENOM" id="CLU_008510_0_0_1"/>
<dbReference type="InParanoid" id="Q96AE7"/>
<dbReference type="OMA" id="PDDHAKQ"/>
<dbReference type="OrthoDB" id="2115703at2759"/>
<dbReference type="PAN-GO" id="Q96AE7">
    <property type="GO annotations" value="4 GO annotations based on evolutionary models"/>
</dbReference>
<dbReference type="PhylomeDB" id="Q96AE7"/>
<dbReference type="TreeFam" id="TF315005"/>
<dbReference type="PathwayCommons" id="Q96AE7"/>
<dbReference type="SignaLink" id="Q96AE7"/>
<dbReference type="BioGRID-ORCS" id="55761">
    <property type="hits" value="11 hits in 1158 CRISPR screens"/>
</dbReference>
<dbReference type="CD-CODE" id="232F8A39">
    <property type="entry name" value="P-body"/>
</dbReference>
<dbReference type="CD-CODE" id="DEE660B4">
    <property type="entry name" value="Stress granule"/>
</dbReference>
<dbReference type="ChiTaRS" id="TTC17">
    <property type="organism name" value="human"/>
</dbReference>
<dbReference type="GenomeRNAi" id="55761"/>
<dbReference type="Pharos" id="Q96AE7">
    <property type="development level" value="Tdark"/>
</dbReference>
<dbReference type="PRO" id="PR:Q96AE7"/>
<dbReference type="Proteomes" id="UP000005640">
    <property type="component" value="Chromosome 11"/>
</dbReference>
<dbReference type="RNAct" id="Q96AE7">
    <property type="molecule type" value="protein"/>
</dbReference>
<dbReference type="Bgee" id="ENSG00000052841">
    <property type="expression patterns" value="Expressed in right uterine tube and 196 other cell types or tissues"/>
</dbReference>
<dbReference type="ExpressionAtlas" id="Q96AE7">
    <property type="expression patterns" value="baseline and differential"/>
</dbReference>
<dbReference type="GO" id="GO:0015629">
    <property type="term" value="C:actin cytoskeleton"/>
    <property type="evidence" value="ECO:0000314"/>
    <property type="project" value="UniProtKB"/>
</dbReference>
<dbReference type="GO" id="GO:0005737">
    <property type="term" value="C:cytoplasm"/>
    <property type="evidence" value="ECO:0000314"/>
    <property type="project" value="UniProtKB"/>
</dbReference>
<dbReference type="GO" id="GO:0005829">
    <property type="term" value="C:cytosol"/>
    <property type="evidence" value="ECO:0000314"/>
    <property type="project" value="HPA"/>
</dbReference>
<dbReference type="GO" id="GO:0005886">
    <property type="term" value="C:plasma membrane"/>
    <property type="evidence" value="ECO:0000314"/>
    <property type="project" value="HPA"/>
</dbReference>
<dbReference type="GO" id="GO:0030041">
    <property type="term" value="P:actin filament polymerization"/>
    <property type="evidence" value="ECO:0000315"/>
    <property type="project" value="UniProtKB"/>
</dbReference>
<dbReference type="GO" id="GO:0044782">
    <property type="term" value="P:cilium organization"/>
    <property type="evidence" value="ECO:0000315"/>
    <property type="project" value="UniProtKB"/>
</dbReference>
<dbReference type="FunFam" id="1.25.40.10:FF:000053">
    <property type="entry name" value="Tetratricopeptide repeat domain 17"/>
    <property type="match status" value="1"/>
</dbReference>
<dbReference type="FunFam" id="1.25.40.10:FF:000061">
    <property type="entry name" value="Tetratricopeptide repeat domain 17"/>
    <property type="match status" value="1"/>
</dbReference>
<dbReference type="FunFam" id="1.25.40.10:FF:000111">
    <property type="entry name" value="tetratricopeptide repeat protein 17 isoform X1"/>
    <property type="match status" value="1"/>
</dbReference>
<dbReference type="Gene3D" id="1.25.40.10">
    <property type="entry name" value="Tetratricopeptide repeat domain"/>
    <property type="match status" value="3"/>
</dbReference>
<dbReference type="InterPro" id="IPR011990">
    <property type="entry name" value="TPR-like_helical_dom_sf"/>
</dbReference>
<dbReference type="InterPro" id="IPR019734">
    <property type="entry name" value="TPR_rpt"/>
</dbReference>
<dbReference type="InterPro" id="IPR052630">
    <property type="entry name" value="TTC17"/>
</dbReference>
<dbReference type="PANTHER" id="PTHR16091:SF1">
    <property type="entry name" value="TETRATRICOPEPTIDE REPEAT PROTEIN 17"/>
    <property type="match status" value="1"/>
</dbReference>
<dbReference type="PANTHER" id="PTHR16091">
    <property type="entry name" value="TTC17 PROTEIN"/>
    <property type="match status" value="1"/>
</dbReference>
<dbReference type="Pfam" id="PF13181">
    <property type="entry name" value="TPR_8"/>
    <property type="match status" value="2"/>
</dbReference>
<dbReference type="SMART" id="SM00028">
    <property type="entry name" value="TPR"/>
    <property type="match status" value="7"/>
</dbReference>
<dbReference type="SUPFAM" id="SSF48452">
    <property type="entry name" value="TPR-like"/>
    <property type="match status" value="1"/>
</dbReference>
<dbReference type="PROSITE" id="PS50005">
    <property type="entry name" value="TPR"/>
    <property type="match status" value="4"/>
</dbReference>
<dbReference type="PROSITE" id="PS50293">
    <property type="entry name" value="TPR_REGION"/>
    <property type="match status" value="3"/>
</dbReference>
<comment type="function">
    <text evidence="2">Plays a role in primary ciliogenesis by modulating actin polymerization.</text>
</comment>
<comment type="subunit">
    <text evidence="2">Interacts with CATIP.</text>
</comment>
<comment type="subcellular location">
    <subcellularLocation>
        <location evidence="2">Cytoplasm</location>
    </subcellularLocation>
    <subcellularLocation>
        <location evidence="2">Cell membrane</location>
    </subcellularLocation>
    <subcellularLocation>
        <location evidence="2">Cytoplasm</location>
        <location evidence="2">Cytoskeleton</location>
    </subcellularLocation>
    <text>Colocalized with CATIP at F-actin rich zones and at dynamic plasma membrane protrusions.</text>
</comment>
<comment type="alternative products">
    <event type="alternative splicing"/>
    <isoform>
        <id>Q96AE7-1</id>
        <name>1</name>
        <sequence type="displayed"/>
    </isoform>
    <isoform>
        <id>Q96AE7-2</id>
        <name>2</name>
        <sequence type="described" ref="VSP_056857 VSP_056858 VSP_056859"/>
    </isoform>
</comment>
<comment type="tissue specificity">
    <text evidence="2">Expressed in germ cells as well as in somatic cells of the testis (at protein level).</text>
</comment>
<comment type="similarity">
    <text evidence="4">Belongs to the TTC17 family.</text>
</comment>
<reference key="1">
    <citation type="journal article" date="2006" name="Nature">
        <title>Human chromosome 11 DNA sequence and analysis including novel gene identification.</title>
        <authorList>
            <person name="Taylor T.D."/>
            <person name="Noguchi H."/>
            <person name="Totoki Y."/>
            <person name="Toyoda A."/>
            <person name="Kuroki Y."/>
            <person name="Dewar K."/>
            <person name="Lloyd C."/>
            <person name="Itoh T."/>
            <person name="Takeda T."/>
            <person name="Kim D.-W."/>
            <person name="She X."/>
            <person name="Barlow K.F."/>
            <person name="Bloom T."/>
            <person name="Bruford E."/>
            <person name="Chang J.L."/>
            <person name="Cuomo C.A."/>
            <person name="Eichler E."/>
            <person name="FitzGerald M.G."/>
            <person name="Jaffe D.B."/>
            <person name="LaButti K."/>
            <person name="Nicol R."/>
            <person name="Park H.-S."/>
            <person name="Seaman C."/>
            <person name="Sougnez C."/>
            <person name="Yang X."/>
            <person name="Zimmer A.R."/>
            <person name="Zody M.C."/>
            <person name="Birren B.W."/>
            <person name="Nusbaum C."/>
            <person name="Fujiyama A."/>
            <person name="Hattori M."/>
            <person name="Rogers J."/>
            <person name="Lander E.S."/>
            <person name="Sakaki Y."/>
        </authorList>
    </citation>
    <scope>NUCLEOTIDE SEQUENCE [LARGE SCALE GENOMIC DNA]</scope>
</reference>
<reference key="2">
    <citation type="submission" date="2005-09" db="EMBL/GenBank/DDBJ databases">
        <authorList>
            <person name="Mural R.J."/>
            <person name="Istrail S."/>
            <person name="Sutton G.G."/>
            <person name="Florea L."/>
            <person name="Halpern A.L."/>
            <person name="Mobarry C.M."/>
            <person name="Lippert R."/>
            <person name="Walenz B."/>
            <person name="Shatkay H."/>
            <person name="Dew I."/>
            <person name="Miller J.R."/>
            <person name="Flanigan M.J."/>
            <person name="Edwards N.J."/>
            <person name="Bolanos R."/>
            <person name="Fasulo D."/>
            <person name="Halldorsson B.V."/>
            <person name="Hannenhalli S."/>
            <person name="Turner R."/>
            <person name="Yooseph S."/>
            <person name="Lu F."/>
            <person name="Nusskern D.R."/>
            <person name="Shue B.C."/>
            <person name="Zheng X.H."/>
            <person name="Zhong F."/>
            <person name="Delcher A.L."/>
            <person name="Huson D.H."/>
            <person name="Kravitz S.A."/>
            <person name="Mouchard L."/>
            <person name="Reinert K."/>
            <person name="Remington K.A."/>
            <person name="Clark A.G."/>
            <person name="Waterman M.S."/>
            <person name="Eichler E.E."/>
            <person name="Adams M.D."/>
            <person name="Hunkapiller M.W."/>
            <person name="Myers E.W."/>
            <person name="Venter J.C."/>
        </authorList>
    </citation>
    <scope>NUCLEOTIDE SEQUENCE [LARGE SCALE GENOMIC DNA]</scope>
</reference>
<reference key="3">
    <citation type="journal article" date="2004" name="Genome Res.">
        <title>The status, quality, and expansion of the NIH full-length cDNA project: the Mammalian Gene Collection (MGC).</title>
        <authorList>
            <consortium name="The MGC Project Team"/>
        </authorList>
    </citation>
    <scope>NUCLEOTIDE SEQUENCE [LARGE SCALE MRNA] (ISOFORMS 1 AND 2)</scope>
    <source>
        <tissue>Lung</tissue>
        <tissue>Testis</tissue>
    </source>
</reference>
<reference key="4">
    <citation type="journal article" date="2014" name="PLoS ONE">
        <title>C2orf62 and TTC17 Are Involved in Actin Organization and Ciliogenesis in Zebrafish and Human.</title>
        <authorList>
            <person name="Bontems F."/>
            <person name="Fish R.J."/>
            <person name="Borlat I."/>
            <person name="Lembo F."/>
            <person name="Chocu S."/>
            <person name="Chalmel F."/>
            <person name="Borg J.P."/>
            <person name="Pineau C."/>
            <person name="Neerman-Arbez M."/>
            <person name="Bairoch A."/>
            <person name="Lane L."/>
        </authorList>
    </citation>
    <scope>FUNCTION</scope>
    <scope>INTERACTION WITH CATIP</scope>
    <scope>SUBCELLULAR LOCATION</scope>
    <scope>TISSUE SPECIFICITY</scope>
</reference>
<name>TTC17_HUMAN</name>
<accession>Q96AE7</accession>
<accession>G3XAB3</accession>
<accession>Q8NEC0</accession>
<organism>
    <name type="scientific">Homo sapiens</name>
    <name type="common">Human</name>
    <dbReference type="NCBI Taxonomy" id="9606"/>
    <lineage>
        <taxon>Eukaryota</taxon>
        <taxon>Metazoa</taxon>
        <taxon>Chordata</taxon>
        <taxon>Craniata</taxon>
        <taxon>Vertebrata</taxon>
        <taxon>Euteleostomi</taxon>
        <taxon>Mammalia</taxon>
        <taxon>Eutheria</taxon>
        <taxon>Euarchontoglires</taxon>
        <taxon>Primates</taxon>
        <taxon>Haplorrhini</taxon>
        <taxon>Catarrhini</taxon>
        <taxon>Hominidae</taxon>
        <taxon>Homo</taxon>
    </lineage>
</organism>
<gene>
    <name type="primary">TTC17</name>
</gene>
<protein>
    <recommendedName>
        <fullName>Tetratricopeptide repeat protein 17</fullName>
        <shortName>TPR repeat protein 17</shortName>
    </recommendedName>
</protein>
<feature type="chain" id="PRO_0000106406" description="Tetratricopeptide repeat protein 17">
    <location>
        <begin position="1"/>
        <end position="1141"/>
    </location>
</feature>
<feature type="repeat" description="TPR 1">
    <location>
        <begin position="295"/>
        <end position="328"/>
    </location>
</feature>
<feature type="repeat" description="TPR 2">
    <location>
        <begin position="619"/>
        <end position="652"/>
    </location>
</feature>
<feature type="repeat" description="TPR 3">
    <location>
        <begin position="689"/>
        <end position="722"/>
    </location>
</feature>
<feature type="repeat" description="TPR 4">
    <location>
        <begin position="1014"/>
        <end position="1048"/>
    </location>
</feature>
<feature type="repeat" description="TPR 5">
    <location>
        <begin position="1051"/>
        <end position="1084"/>
    </location>
</feature>
<feature type="repeat" description="TPR 6">
    <location>
        <begin position="1085"/>
        <end position="1118"/>
    </location>
</feature>
<feature type="coiled-coil region" evidence="1">
    <location>
        <begin position="340"/>
        <end position="382"/>
    </location>
</feature>
<feature type="splice variant" id="VSP_056857" description="In isoform 2." evidence="3">
    <original>G</original>
    <variation>GNCHEKTLDNSHDKQKYFDNSQSLDAAEEEPSERGTEEDPVFSVENSGRDSDALRLES</variation>
    <location>
        <position position="751"/>
    </location>
</feature>
<feature type="splice variant" id="VSP_056858" description="In isoform 2." evidence="3">
    <original>KKRDYQRLG</original>
    <variation>LLDWKTRKV</variation>
    <location>
        <begin position="890"/>
        <end position="898"/>
    </location>
</feature>
<feature type="splice variant" id="VSP_056859" description="In isoform 2." evidence="3">
    <location>
        <begin position="899"/>
        <end position="1140"/>
    </location>
</feature>
<feature type="sequence variant" id="VAR_034135" description="In dbSNP:rs12099204.">
    <original>I</original>
    <variation>L</variation>
    <location>
        <position position="145"/>
    </location>
</feature>
<feature type="sequence variant" id="VAR_052627" description="In dbSNP:rs16937479.">
    <original>N</original>
    <variation>H</variation>
    <location>
        <position position="270"/>
    </location>
</feature>
<feature type="sequence conflict" description="In Ref. 3; AAH33000." evidence="4" ref="3">
    <original>E</original>
    <variation>G</variation>
    <location sequence="Q96AE7-2">
        <position position="787"/>
    </location>
</feature>